<dbReference type="EC" id="4.1.1.98" evidence="1"/>
<dbReference type="EMBL" id="CU207211">
    <property type="protein sequence ID" value="CAL61221.2"/>
    <property type="molecule type" value="Genomic_DNA"/>
</dbReference>
<dbReference type="SMR" id="A4G3Y4"/>
<dbReference type="STRING" id="204773.HEAR1041"/>
<dbReference type="KEGG" id="har:HEAR1041"/>
<dbReference type="eggNOG" id="COG0043">
    <property type="taxonomic scope" value="Bacteria"/>
</dbReference>
<dbReference type="HOGENOM" id="CLU_023348_4_1_4"/>
<dbReference type="OrthoDB" id="9809841at2"/>
<dbReference type="UniPathway" id="UPA00232"/>
<dbReference type="Proteomes" id="UP000006697">
    <property type="component" value="Chromosome"/>
</dbReference>
<dbReference type="GO" id="GO:0005829">
    <property type="term" value="C:cytosol"/>
    <property type="evidence" value="ECO:0007669"/>
    <property type="project" value="TreeGrafter"/>
</dbReference>
<dbReference type="GO" id="GO:0005886">
    <property type="term" value="C:plasma membrane"/>
    <property type="evidence" value="ECO:0007669"/>
    <property type="project" value="UniProtKB-SubCell"/>
</dbReference>
<dbReference type="GO" id="GO:0008694">
    <property type="term" value="F:3-octaprenyl-4-hydroxybenzoate carboxy-lyase activity"/>
    <property type="evidence" value="ECO:0007669"/>
    <property type="project" value="UniProtKB-UniRule"/>
</dbReference>
<dbReference type="GO" id="GO:0046872">
    <property type="term" value="F:metal ion binding"/>
    <property type="evidence" value="ECO:0007669"/>
    <property type="project" value="UniProtKB-KW"/>
</dbReference>
<dbReference type="GO" id="GO:0006744">
    <property type="term" value="P:ubiquinone biosynthetic process"/>
    <property type="evidence" value="ECO:0007669"/>
    <property type="project" value="UniProtKB-UniRule"/>
</dbReference>
<dbReference type="FunFam" id="1.20.5.570:FF:000001">
    <property type="entry name" value="3-octaprenyl-4-hydroxybenzoate carboxy-lyase"/>
    <property type="match status" value="1"/>
</dbReference>
<dbReference type="FunFam" id="3.40.1670.10:FF:000001">
    <property type="entry name" value="3-octaprenyl-4-hydroxybenzoate carboxy-lyase"/>
    <property type="match status" value="1"/>
</dbReference>
<dbReference type="Gene3D" id="1.20.5.570">
    <property type="entry name" value="Single helix bin"/>
    <property type="match status" value="1"/>
</dbReference>
<dbReference type="Gene3D" id="3.40.1670.10">
    <property type="entry name" value="UbiD C-terminal domain-like"/>
    <property type="match status" value="1"/>
</dbReference>
<dbReference type="HAMAP" id="MF_01636">
    <property type="entry name" value="UbiD"/>
    <property type="match status" value="1"/>
</dbReference>
<dbReference type="InterPro" id="IPR002830">
    <property type="entry name" value="UbiD"/>
</dbReference>
<dbReference type="InterPro" id="IPR049381">
    <property type="entry name" value="UbiD-like_C"/>
</dbReference>
<dbReference type="InterPro" id="IPR049383">
    <property type="entry name" value="UbiD-like_N"/>
</dbReference>
<dbReference type="InterPro" id="IPR023677">
    <property type="entry name" value="UbiD_bacteria"/>
</dbReference>
<dbReference type="InterPro" id="IPR048304">
    <property type="entry name" value="UbiD_Rift_dom"/>
</dbReference>
<dbReference type="NCBIfam" id="NF008175">
    <property type="entry name" value="PRK10922.1"/>
    <property type="match status" value="1"/>
</dbReference>
<dbReference type="NCBIfam" id="TIGR00148">
    <property type="entry name" value="UbiD family decarboxylase"/>
    <property type="match status" value="1"/>
</dbReference>
<dbReference type="PANTHER" id="PTHR30108">
    <property type="entry name" value="3-OCTAPRENYL-4-HYDROXYBENZOATE CARBOXY-LYASE-RELATED"/>
    <property type="match status" value="1"/>
</dbReference>
<dbReference type="PANTHER" id="PTHR30108:SF17">
    <property type="entry name" value="FERULIC ACID DECARBOXYLASE 1"/>
    <property type="match status" value="1"/>
</dbReference>
<dbReference type="Pfam" id="PF01977">
    <property type="entry name" value="UbiD"/>
    <property type="match status" value="1"/>
</dbReference>
<dbReference type="Pfam" id="PF20696">
    <property type="entry name" value="UbiD_C"/>
    <property type="match status" value="1"/>
</dbReference>
<dbReference type="Pfam" id="PF20695">
    <property type="entry name" value="UbiD_N"/>
    <property type="match status" value="1"/>
</dbReference>
<dbReference type="SUPFAM" id="SSF50475">
    <property type="entry name" value="FMN-binding split barrel"/>
    <property type="match status" value="1"/>
</dbReference>
<dbReference type="SUPFAM" id="SSF143968">
    <property type="entry name" value="UbiD C-terminal domain-like"/>
    <property type="match status" value="1"/>
</dbReference>
<feature type="chain" id="PRO_1000186714" description="3-octaprenyl-4-hydroxybenzoate carboxy-lyase">
    <location>
        <begin position="1"/>
        <end position="494"/>
    </location>
</feature>
<feature type="active site" description="Proton donor" evidence="1">
    <location>
        <position position="294"/>
    </location>
</feature>
<feature type="binding site" evidence="1">
    <location>
        <position position="172"/>
    </location>
    <ligand>
        <name>Mn(2+)</name>
        <dbReference type="ChEBI" id="CHEBI:29035"/>
    </ligand>
</feature>
<feature type="binding site" evidence="1">
    <location>
        <begin position="175"/>
        <end position="177"/>
    </location>
    <ligand>
        <name>prenylated FMN</name>
        <dbReference type="ChEBI" id="CHEBI:87746"/>
    </ligand>
</feature>
<feature type="binding site" evidence="1">
    <location>
        <begin position="189"/>
        <end position="191"/>
    </location>
    <ligand>
        <name>prenylated FMN</name>
        <dbReference type="ChEBI" id="CHEBI:87746"/>
    </ligand>
</feature>
<feature type="binding site" evidence="1">
    <location>
        <begin position="194"/>
        <end position="195"/>
    </location>
    <ligand>
        <name>prenylated FMN</name>
        <dbReference type="ChEBI" id="CHEBI:87746"/>
    </ligand>
</feature>
<feature type="binding site" evidence="1">
    <location>
        <position position="238"/>
    </location>
    <ligand>
        <name>Mn(2+)</name>
        <dbReference type="ChEBI" id="CHEBI:29035"/>
    </ligand>
</feature>
<evidence type="ECO:0000255" key="1">
    <source>
        <dbReference type="HAMAP-Rule" id="MF_01636"/>
    </source>
</evidence>
<protein>
    <recommendedName>
        <fullName evidence="1">3-octaprenyl-4-hydroxybenzoate carboxy-lyase</fullName>
        <ecNumber evidence="1">4.1.1.98</ecNumber>
    </recommendedName>
    <alternativeName>
        <fullName evidence="1">Polyprenyl p-hydroxybenzoate decarboxylase</fullName>
    </alternativeName>
</protein>
<reference key="1">
    <citation type="journal article" date="2007" name="PLoS Genet.">
        <title>A tale of two oxidation states: bacterial colonization of arsenic-rich environments.</title>
        <authorList>
            <person name="Muller D."/>
            <person name="Medigue C."/>
            <person name="Koechler S."/>
            <person name="Barbe V."/>
            <person name="Barakat M."/>
            <person name="Talla E."/>
            <person name="Bonnefoy V."/>
            <person name="Krin E."/>
            <person name="Arsene-Ploetze F."/>
            <person name="Carapito C."/>
            <person name="Chandler M."/>
            <person name="Cournoyer B."/>
            <person name="Cruveiller S."/>
            <person name="Dossat C."/>
            <person name="Duval S."/>
            <person name="Heymann M."/>
            <person name="Leize E."/>
            <person name="Lieutaud A."/>
            <person name="Lievremont D."/>
            <person name="Makita Y."/>
            <person name="Mangenot S."/>
            <person name="Nitschke W."/>
            <person name="Ortet P."/>
            <person name="Perdrial N."/>
            <person name="Schoepp B."/>
            <person name="Siguier P."/>
            <person name="Simeonova D.D."/>
            <person name="Rouy Z."/>
            <person name="Segurens B."/>
            <person name="Turlin E."/>
            <person name="Vallenet D."/>
            <person name="van Dorsselaer A."/>
            <person name="Weiss S."/>
            <person name="Weissenbach J."/>
            <person name="Lett M.-C."/>
            <person name="Danchin A."/>
            <person name="Bertin P.N."/>
        </authorList>
    </citation>
    <scope>NUCLEOTIDE SEQUENCE [LARGE SCALE GENOMIC DNA]</scope>
    <source>
        <strain>ULPAs1</strain>
    </source>
</reference>
<organism>
    <name type="scientific">Herminiimonas arsenicoxydans</name>
    <dbReference type="NCBI Taxonomy" id="204773"/>
    <lineage>
        <taxon>Bacteria</taxon>
        <taxon>Pseudomonadati</taxon>
        <taxon>Pseudomonadota</taxon>
        <taxon>Betaproteobacteria</taxon>
        <taxon>Burkholderiales</taxon>
        <taxon>Oxalobacteraceae</taxon>
        <taxon>Herminiimonas</taxon>
    </lineage>
</organism>
<keyword id="KW-1003">Cell membrane</keyword>
<keyword id="KW-0210">Decarboxylase</keyword>
<keyword id="KW-0285">Flavoprotein</keyword>
<keyword id="KW-0288">FMN</keyword>
<keyword id="KW-0456">Lyase</keyword>
<keyword id="KW-0464">Manganese</keyword>
<keyword id="KW-0472">Membrane</keyword>
<keyword id="KW-0479">Metal-binding</keyword>
<keyword id="KW-1185">Reference proteome</keyword>
<keyword id="KW-0831">Ubiquinone biosynthesis</keyword>
<gene>
    <name evidence="1" type="primary">ubiD</name>
    <name type="ordered locus">HEAR1041</name>
</gene>
<proteinExistence type="inferred from homology"/>
<sequence length="494" mass="55611">MKYSDLRDFISQLQQMGELKRINMPVSPYLEMTEICDRTLRAEGPALLFENPTGHTIPVLGNLFGTPQRVALGMGATDVSELRKIGHVLAMLKEPEPPKGFKDMLGLGSLVKSLWDMTPKERRDAPCHDIVWEGNDVDLARLPIQHCWPGDIAPLITWGLVITKGPHKKRQNLGIYRQQVIGRNKVIMRWLAQRGGALDFREHSIANRGQPYPIAVALGADPATILGAVTPVPDSLSEYQFAGLLRGSRTELVKAIGSELRVPASAEIVLEGHIYPDESHPSGYEHALEGPYGDHTGYYNEQDTFPVFTIDRITMRRDPIYHSTYTGKPPDEPAILGVALNEVFIPLLQKQFSEILDFYLPPEGCSYRMAVVQMKKAYPGHAKRVMFGVWSFLRQFMYTKFIIVVDEDVNIRDWKEVIWAITTRVDPTRDTTLVDNTPIDYLDFASPVSGLGSKMGIDATNKWPGETDREWGTTITMTPEVKKRVDQIWQELGI</sequence>
<name>UBID_HERAR</name>
<accession>A4G3Y4</accession>
<comment type="function">
    <text evidence="1">Catalyzes the decarboxylation of 3-octaprenyl-4-hydroxy benzoate to 2-octaprenylphenol, an intermediate step in ubiquinone biosynthesis.</text>
</comment>
<comment type="catalytic activity">
    <reaction evidence="1">
        <text>a 4-hydroxy-3-(all-trans-polyprenyl)benzoate + H(+) = a 2-(all-trans-polyprenyl)phenol + CO2</text>
        <dbReference type="Rhea" id="RHEA:41680"/>
        <dbReference type="Rhea" id="RHEA-COMP:9514"/>
        <dbReference type="Rhea" id="RHEA-COMP:9516"/>
        <dbReference type="ChEBI" id="CHEBI:1269"/>
        <dbReference type="ChEBI" id="CHEBI:15378"/>
        <dbReference type="ChEBI" id="CHEBI:16526"/>
        <dbReference type="ChEBI" id="CHEBI:78396"/>
        <dbReference type="EC" id="4.1.1.98"/>
    </reaction>
</comment>
<comment type="cofactor">
    <cofactor evidence="1">
        <name>prenylated FMN</name>
        <dbReference type="ChEBI" id="CHEBI:87746"/>
    </cofactor>
    <text evidence="1">Binds 1 prenylated FMN per subunit.</text>
</comment>
<comment type="cofactor">
    <cofactor evidence="1">
        <name>Mn(2+)</name>
        <dbReference type="ChEBI" id="CHEBI:29035"/>
    </cofactor>
</comment>
<comment type="pathway">
    <text evidence="1">Cofactor biosynthesis; ubiquinone biosynthesis.</text>
</comment>
<comment type="subunit">
    <text evidence="1">Homohexamer.</text>
</comment>
<comment type="subcellular location">
    <subcellularLocation>
        <location evidence="1">Cell membrane</location>
        <topology evidence="1">Peripheral membrane protein</topology>
    </subcellularLocation>
</comment>
<comment type="similarity">
    <text evidence="1">Belongs to the UbiD family.</text>
</comment>